<comment type="function">
    <text evidence="1">Cell surface-associated calcium-binding protein which plays an important role in adhesion and pathogenesis. Contributes to the resistance to killing by innate immune components in blood and thus attenuates bacterial clearance by interacting with host complement factor H/CFAH and modulating its activity. Also inhibits bacterial opsonization and killing by interacting with host complement regulator C4BPA and thus inhibiting classical complement pathway activation.</text>
</comment>
<comment type="subunit">
    <text evidence="1">Interacts with host complement factor H/CFAH (via C-terminus). Interacts with host complement regulator C4BPA.</text>
</comment>
<comment type="subcellular location">
    <subcellularLocation>
        <location evidence="3">Secreted</location>
        <location evidence="3">Cell wall</location>
        <topology evidence="3">Peptidoglycan-anchor</topology>
    </subcellularLocation>
    <text evidence="1">Anchored to the cell wall by sortase A (By similarity).</text>
</comment>
<comment type="similarity">
    <text evidence="5">Belongs to the serine-aspartate repeat-containing protein (SDr) family.</text>
</comment>
<keyword id="KW-0002">3D-structure</keyword>
<keyword id="KW-0106">Calcium</keyword>
<keyword id="KW-0134">Cell wall</keyword>
<keyword id="KW-0572">Peptidoglycan-anchor</keyword>
<keyword id="KW-0677">Repeat</keyword>
<keyword id="KW-0964">Secreted</keyword>
<keyword id="KW-0732">Signal</keyword>
<keyword id="KW-0843">Virulence</keyword>
<reference key="1">
    <citation type="journal article" date="2004" name="Proc. Natl. Acad. Sci. U.S.A.">
        <title>Complete genomes of two clinical Staphylococcus aureus strains: evidence for the rapid evolution of virulence and drug resistance.</title>
        <authorList>
            <person name="Holden M.T.G."/>
            <person name="Feil E.J."/>
            <person name="Lindsay J.A."/>
            <person name="Peacock S.J."/>
            <person name="Day N.P.J."/>
            <person name="Enright M.C."/>
            <person name="Foster T.J."/>
            <person name="Moore C.E."/>
            <person name="Hurst L."/>
            <person name="Atkin R."/>
            <person name="Barron A."/>
            <person name="Bason N."/>
            <person name="Bentley S.D."/>
            <person name="Chillingworth C."/>
            <person name="Chillingworth T."/>
            <person name="Churcher C."/>
            <person name="Clark L."/>
            <person name="Corton C."/>
            <person name="Cronin A."/>
            <person name="Doggett J."/>
            <person name="Dowd L."/>
            <person name="Feltwell T."/>
            <person name="Hance Z."/>
            <person name="Harris B."/>
            <person name="Hauser H."/>
            <person name="Holroyd S."/>
            <person name="Jagels K."/>
            <person name="James K.D."/>
            <person name="Lennard N."/>
            <person name="Line A."/>
            <person name="Mayes R."/>
            <person name="Moule S."/>
            <person name="Mungall K."/>
            <person name="Ormond D."/>
            <person name="Quail M.A."/>
            <person name="Rabbinowitsch E."/>
            <person name="Rutherford K.M."/>
            <person name="Sanders M."/>
            <person name="Sharp S."/>
            <person name="Simmonds M."/>
            <person name="Stevens K."/>
            <person name="Whitehead S."/>
            <person name="Barrell B.G."/>
            <person name="Spratt B.G."/>
            <person name="Parkhill J."/>
        </authorList>
    </citation>
    <scope>NUCLEOTIDE SEQUENCE [LARGE SCALE GENOMIC DNA]</scope>
    <source>
        <strain>MSSA476</strain>
    </source>
</reference>
<evidence type="ECO:0000250" key="1">
    <source>
        <dbReference type="UniProtKB" id="O86489"/>
    </source>
</evidence>
<evidence type="ECO:0000255" key="2"/>
<evidence type="ECO:0000255" key="3">
    <source>
        <dbReference type="PROSITE-ProRule" id="PRU00477"/>
    </source>
</evidence>
<evidence type="ECO:0000256" key="4">
    <source>
        <dbReference type="SAM" id="MobiDB-lite"/>
    </source>
</evidence>
<evidence type="ECO:0000305" key="5"/>
<evidence type="ECO:0007829" key="6">
    <source>
        <dbReference type="PDB" id="5IHW"/>
    </source>
</evidence>
<protein>
    <recommendedName>
        <fullName>Serine-aspartate repeat-containing protein E</fullName>
    </recommendedName>
</protein>
<proteinExistence type="evidence at protein level"/>
<gene>
    <name type="primary">sdrE</name>
    <name type="ordered locus">SAS0521</name>
</gene>
<name>SDRE_STAAS</name>
<dbReference type="EMBL" id="BX571857">
    <property type="protein sequence ID" value="CAG42296.1"/>
    <property type="molecule type" value="Genomic_DNA"/>
</dbReference>
<dbReference type="RefSeq" id="WP_000610231.1">
    <property type="nucleotide sequence ID" value="NC_002953.3"/>
</dbReference>
<dbReference type="PDB" id="5IHW">
    <property type="method" value="X-ray"/>
    <property type="resolution" value="1.25 A"/>
    <property type="chains" value="A=273-586"/>
</dbReference>
<dbReference type="PDBsum" id="5IHW"/>
<dbReference type="SMR" id="Q6GBS4"/>
<dbReference type="KEGG" id="sas:SAS0521"/>
<dbReference type="HOGENOM" id="CLU_004137_1_1_9"/>
<dbReference type="GO" id="GO:0005576">
    <property type="term" value="C:extracellular region"/>
    <property type="evidence" value="ECO:0007669"/>
    <property type="project" value="UniProtKB-KW"/>
</dbReference>
<dbReference type="GO" id="GO:0007155">
    <property type="term" value="P:cell adhesion"/>
    <property type="evidence" value="ECO:0007669"/>
    <property type="project" value="InterPro"/>
</dbReference>
<dbReference type="Gene3D" id="2.60.40.1280">
    <property type="match status" value="1"/>
</dbReference>
<dbReference type="Gene3D" id="2.60.40.1290">
    <property type="match status" value="1"/>
</dbReference>
<dbReference type="Gene3D" id="2.60.40.10">
    <property type="entry name" value="Immunoglobulins"/>
    <property type="match status" value="3"/>
</dbReference>
<dbReference type="InterPro" id="IPR011266">
    <property type="entry name" value="Adhesin_Fg-bd_dom_2"/>
</dbReference>
<dbReference type="InterPro" id="IPR008966">
    <property type="entry name" value="Adhesion_dom_sf"/>
</dbReference>
<dbReference type="InterPro" id="IPR011252">
    <property type="entry name" value="Fibrogen-bd_dom1"/>
</dbReference>
<dbReference type="InterPro" id="IPR013783">
    <property type="entry name" value="Ig-like_fold"/>
</dbReference>
<dbReference type="InterPro" id="IPR019931">
    <property type="entry name" value="LPXTG_anchor"/>
</dbReference>
<dbReference type="InterPro" id="IPR050972">
    <property type="entry name" value="SDr-like"/>
</dbReference>
<dbReference type="InterPro" id="IPR033764">
    <property type="entry name" value="Sdr_B"/>
</dbReference>
<dbReference type="InterPro" id="IPR041171">
    <property type="entry name" value="SDR_Ig"/>
</dbReference>
<dbReference type="InterPro" id="IPR005877">
    <property type="entry name" value="YSIRK_signal_dom"/>
</dbReference>
<dbReference type="NCBIfam" id="TIGR01167">
    <property type="entry name" value="LPXTG_anchor"/>
    <property type="match status" value="1"/>
</dbReference>
<dbReference type="NCBIfam" id="TIGR01168">
    <property type="entry name" value="YSIRK_signal"/>
    <property type="match status" value="1"/>
</dbReference>
<dbReference type="PANTHER" id="PTHR34403">
    <property type="entry name" value="TOL-PAL SYSTEM PROTEIN TOLA"/>
    <property type="match status" value="1"/>
</dbReference>
<dbReference type="PANTHER" id="PTHR34403:SF8">
    <property type="entry name" value="TOL-PAL SYSTEM PROTEIN TOLA"/>
    <property type="match status" value="1"/>
</dbReference>
<dbReference type="Pfam" id="PF17961">
    <property type="entry name" value="Big_8"/>
    <property type="match status" value="1"/>
</dbReference>
<dbReference type="Pfam" id="PF00746">
    <property type="entry name" value="Gram_pos_anchor"/>
    <property type="match status" value="1"/>
</dbReference>
<dbReference type="Pfam" id="PF17210">
    <property type="entry name" value="SdrD_B"/>
    <property type="match status" value="3"/>
</dbReference>
<dbReference type="Pfam" id="PF10425">
    <property type="entry name" value="SdrG_C_C"/>
    <property type="match status" value="1"/>
</dbReference>
<dbReference type="Pfam" id="PF04650">
    <property type="entry name" value="YSIRK_signal"/>
    <property type="match status" value="1"/>
</dbReference>
<dbReference type="SUPFAM" id="SSF49401">
    <property type="entry name" value="Bacterial adhesins"/>
    <property type="match status" value="2"/>
</dbReference>
<dbReference type="SUPFAM" id="SSF117074">
    <property type="entry name" value="Hypothetical protein PA1324"/>
    <property type="match status" value="3"/>
</dbReference>
<dbReference type="PROSITE" id="PS50847">
    <property type="entry name" value="GRAM_POS_ANCHORING"/>
    <property type="match status" value="1"/>
</dbReference>
<organism>
    <name type="scientific">Staphylococcus aureus (strain MSSA476)</name>
    <dbReference type="NCBI Taxonomy" id="282459"/>
    <lineage>
        <taxon>Bacteria</taxon>
        <taxon>Bacillati</taxon>
        <taxon>Bacillota</taxon>
        <taxon>Bacilli</taxon>
        <taxon>Bacillales</taxon>
        <taxon>Staphylococcaceae</taxon>
        <taxon>Staphylococcus</taxon>
    </lineage>
</organism>
<sequence length="1141" mass="123998">MINRDNKKAITKKGMISNRLNKFSIRKYTVGTASILVGTTLIFGLGNQEAKAAENTSTENAKQDDATTSDNKEVVSEAENNSTTENDSTNPIKKETNTDSQPEAKEESTKSSTQQQQNNVTATTETKPQNIEKENVKPSTDKTATEDTSVILEEKKAPNNTNNDVTTKPSTSEIQTKPTTPQESTNIENSQPQPTPSKVDNQVTDATNPKEPVNVSKEELKNNPEKLKELVRNDSNTDHSTKPVATAPTSVAPKRVNAKMRFAVAQPAAVASNNVNDLIKVTKQTIKVGDGKDNVAAAHDGKDIEYDTEFTIDNKVKKGDTMTINYDKNVIPSDLTDKNDPIDITDPSGEVIAKGTFDKATKQITYTFTDYVDKYEDIKSRLTLYSYIDKKTVPNETSLNLTFATAGKETSQNVTVDYQDPMVHGDSNIQSIFTKLDEDKQTIEQQIYVNPLKKSATNTKVDIAGSQVDDYGNIKLGNGSTIIDQNTEIKVYKVNSDQQLPQSNRIYDFSQYEDVTSQFDNKKSFSNNVATLDFGDINSAYIIKVVSKYTPTSDGELDIAQGTSMRTTDKYGYYNYAGYSNFIVTSNDSGGGDGTVKPEEKLYKIGDYVWEDVDKDGVQGTDSKEKPMANVLVTLTYPDGTTKSVRTDAKGHYEFGGLKDGETYTVKFETPTGYLPTKVNGTTDGEKDSNGSSVTVKINGKDDMSLDTGFYKEPKYNLGDYVWEDTNKDGIQDANEPGIKDVKVTLKDSTGKVIGTTTTDASGKYKFTDLDNGNYTVEFETPAGYTPTVKNTTAEDKDSNGLTTTGVIKDADNMTLDSGFYKTPKYSLGDYVWYDSNKDGKQDSTEKGIKDVTVTLQNEKGEVIGTTKTDENGKYRFDNLDSGKYKVIFEKPAGLTQTVTNTTEDDKDADGGEVDVTITDHDDFTLDNGYFEEDTSDSDSDSDSDSDSDSDSDSDSDSDSDSDSDSESDSDSDSDSDSDSDSDSDSDSDSDSDSDSDSDSDSDSDSDSDSDSDSDSDSDSDSDSDSDSDSDSDSDSDSDSDSDSDSDSDSDSDSDSDSDSDSDSDSDSDSDSDSDSDSDSDAGKHTPVKPMSTTKDHHNKAKALPETGSENNGSNNATLFGGLFAALGSLLLFGRRKKQNK</sequence>
<accession>Q6GBS4</accession>
<feature type="signal peptide" evidence="2">
    <location>
        <begin position="1"/>
        <end position="52"/>
    </location>
</feature>
<feature type="chain" id="PRO_0000281171" description="Serine-aspartate repeat-containing protein E">
    <location>
        <begin position="53"/>
        <end position="1107"/>
    </location>
</feature>
<feature type="propeptide" id="PRO_0000281172" description="Removed by sortase" evidence="3">
    <location>
        <begin position="1108"/>
        <end position="1141"/>
    </location>
</feature>
<feature type="domain" description="CNA-B 1">
    <location>
        <begin position="602"/>
        <end position="714"/>
    </location>
</feature>
<feature type="domain" description="CNA-B 2">
    <location>
        <begin position="715"/>
        <end position="824"/>
    </location>
</feature>
<feature type="domain" description="CNA-B 3">
    <location>
        <begin position="825"/>
        <end position="935"/>
    </location>
</feature>
<feature type="region of interest" description="Ligand binding A region">
    <location>
        <begin position="53"/>
        <end position="601"/>
    </location>
</feature>
<feature type="region of interest" description="Disordered" evidence="4">
    <location>
        <begin position="54"/>
        <end position="225"/>
    </location>
</feature>
<feature type="region of interest" description="Disordered" evidence="4">
    <location>
        <begin position="899"/>
        <end position="1117"/>
    </location>
</feature>
<feature type="short sequence motif" description="YSIRK-G/S signaling motif" evidence="1">
    <location>
        <begin position="23"/>
        <end position="34"/>
    </location>
</feature>
<feature type="short sequence motif" description="LPXTG sorting signal" evidence="3">
    <location>
        <begin position="1104"/>
        <end position="1108"/>
    </location>
</feature>
<feature type="compositionally biased region" description="Basic and acidic residues" evidence="4">
    <location>
        <begin position="61"/>
        <end position="75"/>
    </location>
</feature>
<feature type="compositionally biased region" description="Low complexity" evidence="4">
    <location>
        <begin position="77"/>
        <end position="90"/>
    </location>
</feature>
<feature type="compositionally biased region" description="Basic and acidic residues" evidence="4">
    <location>
        <begin position="92"/>
        <end position="109"/>
    </location>
</feature>
<feature type="compositionally biased region" description="Low complexity" evidence="4">
    <location>
        <begin position="110"/>
        <end position="126"/>
    </location>
</feature>
<feature type="compositionally biased region" description="Basic and acidic residues" evidence="4">
    <location>
        <begin position="130"/>
        <end position="145"/>
    </location>
</feature>
<feature type="compositionally biased region" description="Polar residues" evidence="4">
    <location>
        <begin position="158"/>
        <end position="207"/>
    </location>
</feature>
<feature type="compositionally biased region" description="Basic and acidic residues" evidence="4">
    <location>
        <begin position="216"/>
        <end position="225"/>
    </location>
</feature>
<feature type="compositionally biased region" description="Acidic residues" evidence="4">
    <location>
        <begin position="903"/>
        <end position="913"/>
    </location>
</feature>
<feature type="compositionally biased region" description="Acidic residues" evidence="4">
    <location>
        <begin position="930"/>
        <end position="1080"/>
    </location>
</feature>
<feature type="modified residue" description="Pentaglycyl murein peptidoglycan amidated threonine" evidence="3">
    <location>
        <position position="1107"/>
    </location>
</feature>
<feature type="helix" evidence="6">
    <location>
        <begin position="276"/>
        <end position="278"/>
    </location>
</feature>
<feature type="strand" evidence="6">
    <location>
        <begin position="279"/>
        <end position="290"/>
    </location>
</feature>
<feature type="helix" evidence="6">
    <location>
        <begin position="291"/>
        <end position="293"/>
    </location>
</feature>
<feature type="strand" evidence="6">
    <location>
        <begin position="297"/>
        <end position="312"/>
    </location>
</feature>
<feature type="strand" evidence="6">
    <location>
        <begin position="321"/>
        <end position="325"/>
    </location>
</feature>
<feature type="strand" evidence="6">
    <location>
        <begin position="330"/>
        <end position="332"/>
    </location>
</feature>
<feature type="strand" evidence="6">
    <location>
        <begin position="351"/>
        <end position="358"/>
    </location>
</feature>
<feature type="turn" evidence="6">
    <location>
        <begin position="359"/>
        <end position="362"/>
    </location>
</feature>
<feature type="strand" evidence="6">
    <location>
        <begin position="363"/>
        <end position="368"/>
    </location>
</feature>
<feature type="helix" evidence="6">
    <location>
        <begin position="371"/>
        <end position="374"/>
    </location>
</feature>
<feature type="strand" evidence="6">
    <location>
        <begin position="376"/>
        <end position="388"/>
    </location>
</feature>
<feature type="turn" evidence="6">
    <location>
        <begin position="390"/>
        <end position="392"/>
    </location>
</feature>
<feature type="strand" evidence="6">
    <location>
        <begin position="397"/>
        <end position="405"/>
    </location>
</feature>
<feature type="strand" evidence="6">
    <location>
        <begin position="408"/>
        <end position="416"/>
    </location>
</feature>
<feature type="strand" evidence="6">
    <location>
        <begin position="422"/>
        <end position="424"/>
    </location>
</feature>
<feature type="strand" evidence="6">
    <location>
        <begin position="427"/>
        <end position="437"/>
    </location>
</feature>
<feature type="turn" evidence="6">
    <location>
        <begin position="438"/>
        <end position="441"/>
    </location>
</feature>
<feature type="strand" evidence="6">
    <location>
        <begin position="442"/>
        <end position="450"/>
    </location>
</feature>
<feature type="strand" evidence="6">
    <location>
        <begin position="456"/>
        <end position="468"/>
    </location>
</feature>
<feature type="strand" evidence="6">
    <location>
        <begin position="474"/>
        <end position="480"/>
    </location>
</feature>
<feature type="strand" evidence="6">
    <location>
        <begin position="487"/>
        <end position="493"/>
    </location>
</feature>
<feature type="helix" evidence="6">
    <location>
        <begin position="509"/>
        <end position="511"/>
    </location>
</feature>
<feature type="strand" evidence="6">
    <location>
        <begin position="512"/>
        <end position="514"/>
    </location>
</feature>
<feature type="helix" evidence="6">
    <location>
        <begin position="516"/>
        <end position="519"/>
    </location>
</feature>
<feature type="strand" evidence="6">
    <location>
        <begin position="522"/>
        <end position="526"/>
    </location>
</feature>
<feature type="strand" evidence="6">
    <location>
        <begin position="529"/>
        <end position="537"/>
    </location>
</feature>
<feature type="strand" evidence="6">
    <location>
        <begin position="541"/>
        <end position="548"/>
    </location>
</feature>
<feature type="strand" evidence="6">
    <location>
        <begin position="558"/>
        <end position="568"/>
    </location>
</feature>
<feature type="strand" evidence="6">
    <location>
        <begin position="574"/>
        <end position="585"/>
    </location>
</feature>